<protein>
    <recommendedName>
        <fullName evidence="1">Probable transcriptional regulatory protein Rsph17025_0577</fullName>
    </recommendedName>
</protein>
<evidence type="ECO:0000255" key="1">
    <source>
        <dbReference type="HAMAP-Rule" id="MF_00693"/>
    </source>
</evidence>
<evidence type="ECO:0000256" key="2">
    <source>
        <dbReference type="SAM" id="MobiDB-lite"/>
    </source>
</evidence>
<proteinExistence type="inferred from homology"/>
<keyword id="KW-0963">Cytoplasm</keyword>
<keyword id="KW-0238">DNA-binding</keyword>
<keyword id="KW-0804">Transcription</keyword>
<keyword id="KW-0805">Transcription regulation</keyword>
<accession>A4WQ19</accession>
<name>Y577_CERS5</name>
<sequence length="248" mass="27180">MAGHSKWANIQHRKGKQDKLRSKMFSKLAKEITVAAKMGDPDPDKNPRLRLAVKAAKAVSMPKDVIERAIKKSQGGDAEDYSEIRYEGYGPNGIAIIVETMTDNVNRTASNVRSYFTKFGGNLGTTGSVSFMFDRVGEITYKPAAGDADTVMMAAIEAGADDVESDEDGHWIYCGDTSLNEVSEALEKVLGESEEAKLVWKPQNRTNVDLETAQKLMKLIDALEEDDDVQTVTANFDIPEDVAARLDA</sequence>
<organism>
    <name type="scientific">Cereibacter sphaeroides (strain ATCC 17025 / ATH 2.4.3)</name>
    <name type="common">Rhodobacter sphaeroides</name>
    <dbReference type="NCBI Taxonomy" id="349102"/>
    <lineage>
        <taxon>Bacteria</taxon>
        <taxon>Pseudomonadati</taxon>
        <taxon>Pseudomonadota</taxon>
        <taxon>Alphaproteobacteria</taxon>
        <taxon>Rhodobacterales</taxon>
        <taxon>Paracoccaceae</taxon>
        <taxon>Cereibacter</taxon>
    </lineage>
</organism>
<comment type="subcellular location">
    <subcellularLocation>
        <location evidence="1">Cytoplasm</location>
    </subcellularLocation>
</comment>
<comment type="similarity">
    <text evidence="1">Belongs to the TACO1 family.</text>
</comment>
<reference key="1">
    <citation type="submission" date="2007-04" db="EMBL/GenBank/DDBJ databases">
        <title>Complete sequence of chromosome of Rhodobacter sphaeroides ATCC 17025.</title>
        <authorList>
            <consortium name="US DOE Joint Genome Institute"/>
            <person name="Copeland A."/>
            <person name="Lucas S."/>
            <person name="Lapidus A."/>
            <person name="Barry K."/>
            <person name="Detter J.C."/>
            <person name="Glavina del Rio T."/>
            <person name="Hammon N."/>
            <person name="Israni S."/>
            <person name="Dalin E."/>
            <person name="Tice H."/>
            <person name="Pitluck S."/>
            <person name="Chertkov O."/>
            <person name="Brettin T."/>
            <person name="Bruce D."/>
            <person name="Han C."/>
            <person name="Schmutz J."/>
            <person name="Larimer F."/>
            <person name="Land M."/>
            <person name="Hauser L."/>
            <person name="Kyrpides N."/>
            <person name="Kim E."/>
            <person name="Richardson P."/>
            <person name="Mackenzie C."/>
            <person name="Choudhary M."/>
            <person name="Donohue T.J."/>
            <person name="Kaplan S."/>
        </authorList>
    </citation>
    <scope>NUCLEOTIDE SEQUENCE [LARGE SCALE GENOMIC DNA]</scope>
    <source>
        <strain>ATCC 17025 / ATH 2.4.3</strain>
    </source>
</reference>
<dbReference type="EMBL" id="CP000661">
    <property type="protein sequence ID" value="ABP69483.1"/>
    <property type="molecule type" value="Genomic_DNA"/>
</dbReference>
<dbReference type="SMR" id="A4WQ19"/>
<dbReference type="STRING" id="349102.Rsph17025_0577"/>
<dbReference type="KEGG" id="rsq:Rsph17025_0577"/>
<dbReference type="eggNOG" id="COG0217">
    <property type="taxonomic scope" value="Bacteria"/>
</dbReference>
<dbReference type="HOGENOM" id="CLU_062974_2_2_5"/>
<dbReference type="BioCyc" id="RSPH349102:G1G8M-594-MONOMER"/>
<dbReference type="GO" id="GO:0005829">
    <property type="term" value="C:cytosol"/>
    <property type="evidence" value="ECO:0007669"/>
    <property type="project" value="TreeGrafter"/>
</dbReference>
<dbReference type="GO" id="GO:0003677">
    <property type="term" value="F:DNA binding"/>
    <property type="evidence" value="ECO:0007669"/>
    <property type="project" value="UniProtKB-UniRule"/>
</dbReference>
<dbReference type="GO" id="GO:0006355">
    <property type="term" value="P:regulation of DNA-templated transcription"/>
    <property type="evidence" value="ECO:0007669"/>
    <property type="project" value="UniProtKB-UniRule"/>
</dbReference>
<dbReference type="FunFam" id="1.10.10.200:FF:000002">
    <property type="entry name" value="Probable transcriptional regulatory protein CLM62_37755"/>
    <property type="match status" value="1"/>
</dbReference>
<dbReference type="Gene3D" id="1.10.10.200">
    <property type="match status" value="1"/>
</dbReference>
<dbReference type="Gene3D" id="3.30.70.980">
    <property type="match status" value="2"/>
</dbReference>
<dbReference type="HAMAP" id="MF_00693">
    <property type="entry name" value="Transcrip_reg_TACO1"/>
    <property type="match status" value="1"/>
</dbReference>
<dbReference type="InterPro" id="IPR017856">
    <property type="entry name" value="Integrase-like_N"/>
</dbReference>
<dbReference type="InterPro" id="IPR048300">
    <property type="entry name" value="TACO1_YebC-like_2nd/3rd_dom"/>
</dbReference>
<dbReference type="InterPro" id="IPR049083">
    <property type="entry name" value="TACO1_YebC_N"/>
</dbReference>
<dbReference type="InterPro" id="IPR002876">
    <property type="entry name" value="Transcrip_reg_TACO1-like"/>
</dbReference>
<dbReference type="InterPro" id="IPR026564">
    <property type="entry name" value="Transcrip_reg_TACO1-like_dom3"/>
</dbReference>
<dbReference type="InterPro" id="IPR029072">
    <property type="entry name" value="YebC-like"/>
</dbReference>
<dbReference type="NCBIfam" id="NF001030">
    <property type="entry name" value="PRK00110.1"/>
    <property type="match status" value="1"/>
</dbReference>
<dbReference type="NCBIfam" id="NF009044">
    <property type="entry name" value="PRK12378.1"/>
    <property type="match status" value="1"/>
</dbReference>
<dbReference type="NCBIfam" id="TIGR01033">
    <property type="entry name" value="YebC/PmpR family DNA-binding transcriptional regulator"/>
    <property type="match status" value="1"/>
</dbReference>
<dbReference type="PANTHER" id="PTHR12532:SF6">
    <property type="entry name" value="TRANSCRIPTIONAL REGULATORY PROTEIN YEBC-RELATED"/>
    <property type="match status" value="1"/>
</dbReference>
<dbReference type="PANTHER" id="PTHR12532">
    <property type="entry name" value="TRANSLATIONAL ACTIVATOR OF CYTOCHROME C OXIDASE 1"/>
    <property type="match status" value="1"/>
</dbReference>
<dbReference type="Pfam" id="PF20772">
    <property type="entry name" value="TACO1_YebC_N"/>
    <property type="match status" value="1"/>
</dbReference>
<dbReference type="Pfam" id="PF01709">
    <property type="entry name" value="Transcrip_reg"/>
    <property type="match status" value="1"/>
</dbReference>
<dbReference type="SUPFAM" id="SSF75625">
    <property type="entry name" value="YebC-like"/>
    <property type="match status" value="1"/>
</dbReference>
<gene>
    <name type="ordered locus">Rsph17025_0577</name>
</gene>
<feature type="chain" id="PRO_1000045364" description="Probable transcriptional regulatory protein Rsph17025_0577">
    <location>
        <begin position="1"/>
        <end position="248"/>
    </location>
</feature>
<feature type="region of interest" description="Disordered" evidence="2">
    <location>
        <begin position="1"/>
        <end position="21"/>
    </location>
</feature>